<name>IF1C_WHEAT</name>
<gene>
    <name evidence="1" type="primary">infA</name>
</gene>
<geneLocation type="chloroplast"/>
<comment type="function">
    <text evidence="1">One of the essential components for the initiation of protein synthesis. Stabilizes the binding of IF-2 and IF-3 on the 30S subunit to which N-formylmethionyl-tRNA(fMet) subsequently binds. Helps modulate mRNA selection, yielding the 30S pre-initiation complex (PIC). Upon addition of the 50S ribosomal subunit IF-1, IF-2 and IF-3 are released leaving the mature 70S translation initiation complex.</text>
</comment>
<comment type="subunit">
    <text evidence="1">Component of the 30S ribosomal translation pre-initiation complex which assembles on the 30S ribosome in the order IF-2 and IF-3, IF-1 and N-formylmethionyl-tRNA(fMet); mRNA recruitment can occur at any time during PIC assembly.</text>
</comment>
<comment type="subcellular location">
    <subcellularLocation>
        <location evidence="1">Plastid</location>
        <location evidence="1">Chloroplast</location>
    </subcellularLocation>
</comment>
<comment type="similarity">
    <text evidence="1">Belongs to the IF-1 family.</text>
</comment>
<feature type="chain" id="PRO_0000095955" description="Translation initiation factor IF-1, chloroplastic">
    <location>
        <begin position="1"/>
        <end position="113"/>
    </location>
</feature>
<feature type="domain" description="S1-like" evidence="1">
    <location>
        <begin position="8"/>
        <end position="83"/>
    </location>
</feature>
<feature type="region of interest" description="Disordered" evidence="2">
    <location>
        <begin position="86"/>
        <end position="113"/>
    </location>
</feature>
<keyword id="KW-0150">Chloroplast</keyword>
<keyword id="KW-0396">Initiation factor</keyword>
<keyword id="KW-0934">Plastid</keyword>
<keyword id="KW-0648">Protein biosynthesis</keyword>
<keyword id="KW-1185">Reference proteome</keyword>
<keyword id="KW-0694">RNA-binding</keyword>
<keyword id="KW-0699">rRNA-binding</keyword>
<reference key="1">
    <citation type="journal article" date="2000" name="Plant Mol. Biol. Rep.">
        <title>Chinese spring wheat (Triticum aestivum L.) chloroplast genome: complete sequence and contig clones.</title>
        <authorList>
            <person name="Ogihara Y."/>
            <person name="Isono K."/>
            <person name="Kojima T."/>
            <person name="Endo A."/>
            <person name="Hanaoka M."/>
            <person name="Shiina T."/>
            <person name="Terachi T."/>
            <person name="Utsugi S."/>
            <person name="Murata M."/>
            <person name="Mori N."/>
            <person name="Takumi S."/>
            <person name="Ikeo K."/>
            <person name="Gojobori T."/>
            <person name="Murai R."/>
            <person name="Murai K."/>
            <person name="Matsuoka Y."/>
            <person name="Ohnishi Y."/>
            <person name="Tajiri H."/>
            <person name="Tsunewaki K."/>
        </authorList>
    </citation>
    <scope>NUCLEOTIDE SEQUENCE [LARGE SCALE GENOMIC DNA]</scope>
    <source>
        <strain>cv. Chinese Spring</strain>
    </source>
</reference>
<sequence length="113" mass="13117">MTEKKNRREKKNPREAKVTFEGLVTEALPNGMFRVRLENDTIILGYISGKIRSSSIRILMGDRVKIEVSRYDSSKGRIIYRLPHKDSKRIEDSKDSEDLKDSEDLKDTKDSKD</sequence>
<protein>
    <recommendedName>
        <fullName evidence="1">Translation initiation factor IF-1, chloroplastic</fullName>
    </recommendedName>
</protein>
<organism>
    <name type="scientific">Triticum aestivum</name>
    <name type="common">Wheat</name>
    <dbReference type="NCBI Taxonomy" id="4565"/>
    <lineage>
        <taxon>Eukaryota</taxon>
        <taxon>Viridiplantae</taxon>
        <taxon>Streptophyta</taxon>
        <taxon>Embryophyta</taxon>
        <taxon>Tracheophyta</taxon>
        <taxon>Spermatophyta</taxon>
        <taxon>Magnoliopsida</taxon>
        <taxon>Liliopsida</taxon>
        <taxon>Poales</taxon>
        <taxon>Poaceae</taxon>
        <taxon>BOP clade</taxon>
        <taxon>Pooideae</taxon>
        <taxon>Triticodae</taxon>
        <taxon>Triticeae</taxon>
        <taxon>Triticinae</taxon>
        <taxon>Triticum</taxon>
    </lineage>
</organism>
<dbReference type="EMBL" id="AB042240">
    <property type="protein sequence ID" value="BAB47068.1"/>
    <property type="molecule type" value="Genomic_DNA"/>
</dbReference>
<dbReference type="RefSeq" id="NP_114292.1">
    <property type="nucleotide sequence ID" value="NC_002762.1"/>
</dbReference>
<dbReference type="SMR" id="P58272"/>
<dbReference type="STRING" id="4565.P58272"/>
<dbReference type="PaxDb" id="4565-EPlTAEP00000010042"/>
<dbReference type="EnsemblPlants" id="TraesKAR3B01G0431940.1">
    <property type="protein sequence ID" value="cds.TraesKAR3B01G0431940.1"/>
    <property type="gene ID" value="TraesKAR3B01G0431940"/>
</dbReference>
<dbReference type="EnsemblPlants" id="TraesKAR4D01G0083900.1">
    <property type="protein sequence ID" value="cds.TraesKAR4D01G0083900.1"/>
    <property type="gene ID" value="TraesKAR4D01G0083900"/>
</dbReference>
<dbReference type="EnsemblPlants" id="TraesLAC3B03G01657720.1">
    <property type="protein sequence ID" value="TraesLAC3B03G01657720.1.CDS1"/>
    <property type="gene ID" value="TraesLAC3B03G01657720"/>
</dbReference>
<dbReference type="EnsemblPlants" id="TraesLAC7D03G04438960.1">
    <property type="protein sequence ID" value="TraesLAC7D03G04438960.1.CDS1"/>
    <property type="gene ID" value="TraesLAC7D03G04438960"/>
</dbReference>
<dbReference type="EnsemblPlants" id="TraesMAC1D03G00454800.1">
    <property type="protein sequence ID" value="TraesMAC1D03G00454800.1.CDS1"/>
    <property type="gene ID" value="TraesMAC1D03G00454800"/>
</dbReference>
<dbReference type="EnsemblPlants" id="TraesMAC3B03G01717240.1">
    <property type="protein sequence ID" value="TraesMAC3B03G01717240.1.CDS1"/>
    <property type="gene ID" value="TraesMAC3B03G01717240"/>
</dbReference>
<dbReference type="EnsemblPlants" id="TraesNOR3A03G01382670.1">
    <property type="protein sequence ID" value="TraesNOR3A03G01382670.1.CDS1"/>
    <property type="gene ID" value="TraesNOR3A03G01382670"/>
</dbReference>
<dbReference type="GeneID" id="803198"/>
<dbReference type="Gramene" id="TraesKAR3B01G0431940.1">
    <property type="protein sequence ID" value="cds.TraesKAR3B01G0431940.1"/>
    <property type="gene ID" value="TraesKAR3B01G0431940"/>
</dbReference>
<dbReference type="Gramene" id="TraesKAR4D01G0083900.1">
    <property type="protein sequence ID" value="cds.TraesKAR4D01G0083900.1"/>
    <property type="gene ID" value="TraesKAR4D01G0083900"/>
</dbReference>
<dbReference type="Gramene" id="TraesLAC3B03G01657720.1">
    <property type="protein sequence ID" value="TraesLAC3B03G01657720.1.CDS1"/>
    <property type="gene ID" value="TraesLAC3B03G01657720"/>
</dbReference>
<dbReference type="Gramene" id="TraesLAC7D03G04438960.1">
    <property type="protein sequence ID" value="TraesLAC7D03G04438960.1.CDS1"/>
    <property type="gene ID" value="TraesLAC7D03G04438960"/>
</dbReference>
<dbReference type="Gramene" id="TraesMAC1D03G00454800.1">
    <property type="protein sequence ID" value="TraesMAC1D03G00454800.1.CDS1"/>
    <property type="gene ID" value="TraesMAC1D03G00454800"/>
</dbReference>
<dbReference type="Gramene" id="TraesMAC3B03G01717240.1">
    <property type="protein sequence ID" value="TraesMAC3B03G01717240.1.CDS1"/>
    <property type="gene ID" value="TraesMAC3B03G01717240"/>
</dbReference>
<dbReference type="Gramene" id="TraesNOR3A03G01382670.1">
    <property type="protein sequence ID" value="TraesNOR3A03G01382670.1.CDS1"/>
    <property type="gene ID" value="TraesNOR3A03G01382670"/>
</dbReference>
<dbReference type="KEGG" id="taes:803198"/>
<dbReference type="eggNOG" id="ENOG502S8M9">
    <property type="taxonomic scope" value="Eukaryota"/>
</dbReference>
<dbReference type="Proteomes" id="UP000019116">
    <property type="component" value="Chloroplast"/>
</dbReference>
<dbReference type="GO" id="GO:0009507">
    <property type="term" value="C:chloroplast"/>
    <property type="evidence" value="ECO:0007669"/>
    <property type="project" value="UniProtKB-SubCell"/>
</dbReference>
<dbReference type="GO" id="GO:0005829">
    <property type="term" value="C:cytosol"/>
    <property type="evidence" value="ECO:0000318"/>
    <property type="project" value="GO_Central"/>
</dbReference>
<dbReference type="GO" id="GO:0043022">
    <property type="term" value="F:ribosome binding"/>
    <property type="evidence" value="ECO:0000318"/>
    <property type="project" value="GO_Central"/>
</dbReference>
<dbReference type="GO" id="GO:0019843">
    <property type="term" value="F:rRNA binding"/>
    <property type="evidence" value="ECO:0007669"/>
    <property type="project" value="UniProtKB-UniRule"/>
</dbReference>
<dbReference type="GO" id="GO:0003743">
    <property type="term" value="F:translation initiation factor activity"/>
    <property type="evidence" value="ECO:0007669"/>
    <property type="project" value="UniProtKB-UniRule"/>
</dbReference>
<dbReference type="CDD" id="cd04451">
    <property type="entry name" value="S1_IF1"/>
    <property type="match status" value="1"/>
</dbReference>
<dbReference type="FunFam" id="2.40.50.140:FF:000019">
    <property type="entry name" value="Translation initiation factor IF-1, chloroplastic"/>
    <property type="match status" value="1"/>
</dbReference>
<dbReference type="Gene3D" id="2.40.50.140">
    <property type="entry name" value="Nucleic acid-binding proteins"/>
    <property type="match status" value="1"/>
</dbReference>
<dbReference type="HAMAP" id="MF_00075">
    <property type="entry name" value="IF_1"/>
    <property type="match status" value="1"/>
</dbReference>
<dbReference type="InterPro" id="IPR012340">
    <property type="entry name" value="NA-bd_OB-fold"/>
</dbReference>
<dbReference type="InterPro" id="IPR006196">
    <property type="entry name" value="RNA-binding_domain_S1_IF1"/>
</dbReference>
<dbReference type="InterPro" id="IPR003029">
    <property type="entry name" value="S1_domain"/>
</dbReference>
<dbReference type="InterPro" id="IPR004368">
    <property type="entry name" value="TIF_IF1"/>
</dbReference>
<dbReference type="NCBIfam" id="TIGR00008">
    <property type="entry name" value="infA"/>
    <property type="match status" value="1"/>
</dbReference>
<dbReference type="PANTHER" id="PTHR33370">
    <property type="entry name" value="TRANSLATION INITIATION FACTOR IF-1, CHLOROPLASTIC"/>
    <property type="match status" value="1"/>
</dbReference>
<dbReference type="PANTHER" id="PTHR33370:SF1">
    <property type="entry name" value="TRANSLATION INITIATION FACTOR IF-1, CHLOROPLASTIC"/>
    <property type="match status" value="1"/>
</dbReference>
<dbReference type="Pfam" id="PF01176">
    <property type="entry name" value="eIF-1a"/>
    <property type="match status" value="1"/>
</dbReference>
<dbReference type="SMART" id="SM00316">
    <property type="entry name" value="S1"/>
    <property type="match status" value="1"/>
</dbReference>
<dbReference type="SUPFAM" id="SSF50249">
    <property type="entry name" value="Nucleic acid-binding proteins"/>
    <property type="match status" value="1"/>
</dbReference>
<dbReference type="PROSITE" id="PS50832">
    <property type="entry name" value="S1_IF1_TYPE"/>
    <property type="match status" value="1"/>
</dbReference>
<proteinExistence type="inferred from homology"/>
<accession>P58272</accession>
<evidence type="ECO:0000255" key="1">
    <source>
        <dbReference type="HAMAP-Rule" id="MF_00075"/>
    </source>
</evidence>
<evidence type="ECO:0000256" key="2">
    <source>
        <dbReference type="SAM" id="MobiDB-lite"/>
    </source>
</evidence>